<sequence length="77" mass="8763">MKNYSKNATYLITVLLFSFVTMLLIIPSKCEAVSNDMQPLEARTADLVQQPRYIIDVPPRCPPGSKFVHKRCRVIVP</sequence>
<name>SECP2_APIME</name>
<evidence type="ECO:0000250" key="1">
    <source>
        <dbReference type="UniProtKB" id="A0A0K1YW63"/>
    </source>
</evidence>
<evidence type="ECO:0000255" key="2"/>
<evidence type="ECO:0000269" key="3">
    <source>
    </source>
</evidence>
<evidence type="ECO:0000303" key="4">
    <source>
    </source>
</evidence>
<evidence type="ECO:0000305" key="5"/>
<evidence type="ECO:0000305" key="6">
    <source>
    </source>
</evidence>
<evidence type="ECO:0000312" key="7">
    <source>
        <dbReference type="EMBL" id="AFI40557.1"/>
    </source>
</evidence>
<dbReference type="EMBL" id="JQ900379">
    <property type="protein sequence ID" value="AFI40557.1"/>
    <property type="molecule type" value="mRNA"/>
</dbReference>
<dbReference type="InParanoid" id="I1VC85"/>
<dbReference type="Proteomes" id="UP000005203">
    <property type="component" value="Unplaced"/>
</dbReference>
<dbReference type="GO" id="GO:0005576">
    <property type="term" value="C:extracellular region"/>
    <property type="evidence" value="ECO:0007669"/>
    <property type="project" value="UniProtKB-SubCell"/>
</dbReference>
<dbReference type="GO" id="GO:0004867">
    <property type="term" value="F:serine-type endopeptidase inhibitor activity"/>
    <property type="evidence" value="ECO:0007669"/>
    <property type="project" value="UniProtKB-KW"/>
</dbReference>
<dbReference type="GO" id="GO:0042742">
    <property type="term" value="P:defense response to bacterium"/>
    <property type="evidence" value="ECO:0007669"/>
    <property type="project" value="UniProtKB-KW"/>
</dbReference>
<dbReference type="GO" id="GO:0050832">
    <property type="term" value="P:defense response to fungus"/>
    <property type="evidence" value="ECO:0007669"/>
    <property type="project" value="UniProtKB-KW"/>
</dbReference>
<dbReference type="GO" id="GO:0045087">
    <property type="term" value="P:innate immune response"/>
    <property type="evidence" value="ECO:0007669"/>
    <property type="project" value="UniProtKB-KW"/>
</dbReference>
<dbReference type="GO" id="GO:0031640">
    <property type="term" value="P:killing of cells of another organism"/>
    <property type="evidence" value="ECO:0007669"/>
    <property type="project" value="UniProtKB-KW"/>
</dbReference>
<dbReference type="GO" id="GO:0044742">
    <property type="term" value="P:venom-mediated perturbation of sensory perception of pain in another organism"/>
    <property type="evidence" value="ECO:0000314"/>
    <property type="project" value="UniProtKB"/>
</dbReference>
<dbReference type="InterPro" id="IPR020128">
    <property type="entry name" value="Secapin"/>
</dbReference>
<dbReference type="Pfam" id="PF17521">
    <property type="entry name" value="Secapin"/>
    <property type="match status" value="1"/>
</dbReference>
<proteinExistence type="evidence at protein level"/>
<reference evidence="7" key="1">
    <citation type="submission" date="2012-04" db="EMBL/GenBank/DDBJ databases">
        <authorList>
            <person name="Hou C.S."/>
            <person name="Guo L.Q."/>
            <person name="Wang J.R."/>
            <person name="You L.F."/>
            <person name="Lin J.F."/>
            <person name="Wang C.S."/>
            <person name="Wu W.H."/>
            <person name="Wang T."/>
        </authorList>
    </citation>
    <scope>NUCLEOTIDE SEQUENCE [MRNA]</scope>
</reference>
<reference evidence="5" key="2">
    <citation type="journal article" date="2014" name="Peptides">
        <title>Hyperalgesic and edematogenic effects of Secapin-2, a peptide isolated from Africanized honeybee (Apis mellifera) venom.</title>
        <authorList>
            <person name="Mourelle D."/>
            <person name="Brigatte P."/>
            <person name="Bringanti L.D."/>
            <person name="De Souza B.M."/>
            <person name="Arcuri H.A."/>
            <person name="Gomes P.C."/>
            <person name="Baptista-Saidemberg N.B."/>
            <person name="Ruggiero Neto J."/>
            <person name="Palma M.S."/>
        </authorList>
    </citation>
    <scope>PROTEIN SEQUENCE OF 53-77</scope>
    <scope>SYNTHESIS</scope>
    <scope>FUNCTION</scope>
    <scope>SUBCELLULAR LOCATION</scope>
    <scope>TISSUE SPECIFICITY</scope>
    <scope>MASS SPECTROMETRY</scope>
    <scope>AMIDATION AT PRO-77</scope>
    <scope>DISULFIDE BOND</scope>
    <source>
        <tissue evidence="4">Venom</tissue>
    </source>
</reference>
<feature type="signal peptide" evidence="2">
    <location>
        <begin position="1"/>
        <end position="32"/>
    </location>
</feature>
<feature type="propeptide" id="PRO_0000453149" evidence="6">
    <location>
        <begin position="33"/>
        <end position="52"/>
    </location>
</feature>
<feature type="peptide" id="PRO_5003653388" description="Secapin-2" evidence="3">
    <location>
        <begin position="53"/>
        <end position="77"/>
    </location>
</feature>
<feature type="modified residue" description="Proline amide" evidence="3">
    <location>
        <position position="77"/>
    </location>
</feature>
<feature type="disulfide bond" evidence="3">
    <location>
        <begin position="61"/>
        <end position="72"/>
    </location>
</feature>
<accession>I1VC85</accession>
<keyword id="KW-0027">Amidation</keyword>
<keyword id="KW-0044">Antibiotic</keyword>
<keyword id="KW-0929">Antimicrobial</keyword>
<keyword id="KW-0903">Direct protein sequencing</keyword>
<keyword id="KW-1015">Disulfide bond</keyword>
<keyword id="KW-0295">Fungicide</keyword>
<keyword id="KW-1199">Hemostasis impairing toxin</keyword>
<keyword id="KW-0391">Immunity</keyword>
<keyword id="KW-0399">Innate immunity</keyword>
<keyword id="KW-0646">Protease inhibitor</keyword>
<keyword id="KW-1185">Reference proteome</keyword>
<keyword id="KW-0964">Secreted</keyword>
<keyword id="KW-0722">Serine protease inhibitor</keyword>
<keyword id="KW-0732">Signal</keyword>
<keyword id="KW-0800">Toxin</keyword>
<protein>
    <recommendedName>
        <fullName evidence="4">Secapin-2</fullName>
    </recommendedName>
</protein>
<organism evidence="7">
    <name type="scientific">Apis mellifera</name>
    <name type="common">Honeybee</name>
    <dbReference type="NCBI Taxonomy" id="7460"/>
    <lineage>
        <taxon>Eukaryota</taxon>
        <taxon>Metazoa</taxon>
        <taxon>Ecdysozoa</taxon>
        <taxon>Arthropoda</taxon>
        <taxon>Hexapoda</taxon>
        <taxon>Insecta</taxon>
        <taxon>Pterygota</taxon>
        <taxon>Neoptera</taxon>
        <taxon>Endopterygota</taxon>
        <taxon>Hymenoptera</taxon>
        <taxon>Apocrita</taxon>
        <taxon>Aculeata</taxon>
        <taxon>Apoidea</taxon>
        <taxon>Anthophila</taxon>
        <taxon>Apidae</taxon>
        <taxon>Apis</taxon>
    </lineage>
</organism>
<comment type="function">
    <text evidence="1 3">Serine protease inhibitor which exhibits antifibrinolytic, antielastolytic and antimicrobial activities (By similarity). Displays antimicrobial activity against bacteria and fungi (By similarity). Likely functions in the innate immune response to microbial infection and possibly in the venom, as an antifibrinolytic agent (By similarity). Induces hyperalgesia and edema mediated by leukotrienes when injected into mice (PubMed:25017240). Does not induce hemolytic activity, mast cell degranulation, or chemotactic activity for polymorphonucleated leukocytes (PMNL) (PubMed:25017240).</text>
</comment>
<comment type="subcellular location">
    <subcellularLocation>
        <location evidence="3">Secreted</location>
    </subcellularLocation>
</comment>
<comment type="tissue specificity">
    <text evidence="3">Expressed by the venom gland.</text>
</comment>
<comment type="mass spectrometry" mass="2872.58" method="Electrospray" evidence="3">
    <molecule>Secapin-2</molecule>
</comment>
<comment type="similarity">
    <text evidence="5">Belongs to the secapin family.</text>
</comment>